<organism>
    <name type="scientific">Acorus calamus var. americanus</name>
    <name type="common">American sweet flag</name>
    <name type="synonym">Acorus americanus</name>
    <dbReference type="NCBI Taxonomy" id="263995"/>
    <lineage>
        <taxon>Eukaryota</taxon>
        <taxon>Viridiplantae</taxon>
        <taxon>Streptophyta</taxon>
        <taxon>Embryophyta</taxon>
        <taxon>Tracheophyta</taxon>
        <taxon>Spermatophyta</taxon>
        <taxon>Magnoliopsida</taxon>
        <taxon>Liliopsida</taxon>
        <taxon>Acoraceae</taxon>
        <taxon>Acorus</taxon>
    </lineage>
</organism>
<geneLocation type="chloroplast"/>
<name>RK16_ACOCI</name>
<accession>A9LYD8</accession>
<sequence length="135" mass="15313">MLSPKRTRFRKQHRGRMKGMSYRGSHICFGRYALQALEPSWITSRQIEAGRRAMTRYARRGGKIWVRIFPDKPVTIRPAETRMGSGKGSPEYWVSVVKPGRILYEMGGVSETVARAAIEIAASKMPIRTQFIIAG</sequence>
<gene>
    <name evidence="1" type="primary">rpl16</name>
</gene>
<feature type="chain" id="PRO_0000354610" description="Large ribosomal subunit protein uL16c">
    <location>
        <begin position="1"/>
        <end position="135"/>
    </location>
</feature>
<evidence type="ECO:0000255" key="1">
    <source>
        <dbReference type="HAMAP-Rule" id="MF_01342"/>
    </source>
</evidence>
<evidence type="ECO:0000305" key="2"/>
<comment type="subunit">
    <text evidence="1">Part of the 50S ribosomal subunit.</text>
</comment>
<comment type="subcellular location">
    <subcellularLocation>
        <location>Plastid</location>
        <location>Chloroplast</location>
    </subcellularLocation>
</comment>
<comment type="similarity">
    <text evidence="1">Belongs to the universal ribosomal protein uL16 family.</text>
</comment>
<dbReference type="EMBL" id="EU273602">
    <property type="protein sequence ID" value="ABX38781.1"/>
    <property type="molecule type" value="Genomic_DNA"/>
</dbReference>
<dbReference type="RefSeq" id="YP_001586219.1">
    <property type="nucleotide sequence ID" value="NC_010093.1"/>
</dbReference>
<dbReference type="SMR" id="A9LYD8"/>
<dbReference type="GeneID" id="5777801"/>
<dbReference type="GO" id="GO:0009507">
    <property type="term" value="C:chloroplast"/>
    <property type="evidence" value="ECO:0007669"/>
    <property type="project" value="UniProtKB-SubCell"/>
</dbReference>
<dbReference type="GO" id="GO:0005762">
    <property type="term" value="C:mitochondrial large ribosomal subunit"/>
    <property type="evidence" value="ECO:0007669"/>
    <property type="project" value="TreeGrafter"/>
</dbReference>
<dbReference type="GO" id="GO:0019843">
    <property type="term" value="F:rRNA binding"/>
    <property type="evidence" value="ECO:0007669"/>
    <property type="project" value="InterPro"/>
</dbReference>
<dbReference type="GO" id="GO:0003735">
    <property type="term" value="F:structural constituent of ribosome"/>
    <property type="evidence" value="ECO:0007669"/>
    <property type="project" value="InterPro"/>
</dbReference>
<dbReference type="GO" id="GO:0032543">
    <property type="term" value="P:mitochondrial translation"/>
    <property type="evidence" value="ECO:0007669"/>
    <property type="project" value="TreeGrafter"/>
</dbReference>
<dbReference type="CDD" id="cd01433">
    <property type="entry name" value="Ribosomal_L16_L10e"/>
    <property type="match status" value="1"/>
</dbReference>
<dbReference type="FunFam" id="3.90.1170.10:FF:000001">
    <property type="entry name" value="50S ribosomal protein L16"/>
    <property type="match status" value="1"/>
</dbReference>
<dbReference type="Gene3D" id="3.90.1170.10">
    <property type="entry name" value="Ribosomal protein L10e/L16"/>
    <property type="match status" value="1"/>
</dbReference>
<dbReference type="HAMAP" id="MF_01342">
    <property type="entry name" value="Ribosomal_uL16"/>
    <property type="match status" value="1"/>
</dbReference>
<dbReference type="InterPro" id="IPR047873">
    <property type="entry name" value="Ribosomal_uL16"/>
</dbReference>
<dbReference type="InterPro" id="IPR000114">
    <property type="entry name" value="Ribosomal_uL16_bact-type"/>
</dbReference>
<dbReference type="InterPro" id="IPR020798">
    <property type="entry name" value="Ribosomal_uL16_CS"/>
</dbReference>
<dbReference type="InterPro" id="IPR016180">
    <property type="entry name" value="Ribosomal_uL16_dom"/>
</dbReference>
<dbReference type="InterPro" id="IPR036920">
    <property type="entry name" value="Ribosomal_uL16_sf"/>
</dbReference>
<dbReference type="NCBIfam" id="TIGR01164">
    <property type="entry name" value="rplP_bact"/>
    <property type="match status" value="1"/>
</dbReference>
<dbReference type="PANTHER" id="PTHR12220">
    <property type="entry name" value="50S/60S RIBOSOMAL PROTEIN L16"/>
    <property type="match status" value="1"/>
</dbReference>
<dbReference type="PANTHER" id="PTHR12220:SF13">
    <property type="entry name" value="LARGE RIBOSOMAL SUBUNIT PROTEIN UL16M"/>
    <property type="match status" value="1"/>
</dbReference>
<dbReference type="Pfam" id="PF00252">
    <property type="entry name" value="Ribosomal_L16"/>
    <property type="match status" value="1"/>
</dbReference>
<dbReference type="PRINTS" id="PR00060">
    <property type="entry name" value="RIBOSOMALL16"/>
</dbReference>
<dbReference type="SUPFAM" id="SSF54686">
    <property type="entry name" value="Ribosomal protein L16p/L10e"/>
    <property type="match status" value="1"/>
</dbReference>
<dbReference type="PROSITE" id="PS00586">
    <property type="entry name" value="RIBOSOMAL_L16_1"/>
    <property type="match status" value="1"/>
</dbReference>
<dbReference type="PROSITE" id="PS00701">
    <property type="entry name" value="RIBOSOMAL_L16_2"/>
    <property type="match status" value="1"/>
</dbReference>
<reference key="1">
    <citation type="submission" date="2007-11" db="EMBL/GenBank/DDBJ databases">
        <title>The complete chloroplast genome of Acorus americanus.</title>
        <authorList>
            <person name="Peery R.M."/>
            <person name="Chumley T.W."/>
            <person name="Kuehl J.V."/>
            <person name="Boore J.L."/>
            <person name="Raubeson L.A."/>
        </authorList>
    </citation>
    <scope>NUCLEOTIDE SEQUENCE [LARGE SCALE GENOMIC DNA]</scope>
</reference>
<keyword id="KW-0150">Chloroplast</keyword>
<keyword id="KW-0934">Plastid</keyword>
<keyword id="KW-0687">Ribonucleoprotein</keyword>
<keyword id="KW-0689">Ribosomal protein</keyword>
<protein>
    <recommendedName>
        <fullName evidence="1">Large ribosomal subunit protein uL16c</fullName>
    </recommendedName>
    <alternativeName>
        <fullName evidence="2">50S ribosomal protein L16, chloroplastic</fullName>
    </alternativeName>
</protein>
<proteinExistence type="inferred from homology"/>